<sequence length="404" mass="46302">MAEILERSGYLVKVRVEVPADRVKASYEALLKDLASRVRVPGFRPGKAPLKVVEARLGREALLQDLKERLVEETYPEAVRELGLSPVAARVVEQDLSEGEGFRYVAEVENYPEVRLPDWRSFALEVSPPEVTEEMVEKALEELRQRYAELVPVEREAQEKDHLFVRTEEGAEFPIDLAKALPHVREALLGKKAGDVVMVPVLNDKGEKVREVRTEVLEVKTLKLPELDEEFAKTLEAESLEDLKNRVRESLKRQAERAYEEARERAFLEKLAEGLEVEIPPSMLRAEERHLLEHLAEDLYRQGISLEAYLEALKVKGELEKFQEDLRKEAEKRVRIALAREKLAEELNPEVSEEEWQAYLQAAARAYGVSVQDLRRQFGEEGLARLKERLRQDKAVQEALKVLG</sequence>
<proteinExistence type="inferred from homology"/>
<keyword id="KW-0131">Cell cycle</keyword>
<keyword id="KW-0132">Cell division</keyword>
<keyword id="KW-0143">Chaperone</keyword>
<keyword id="KW-0963">Cytoplasm</keyword>
<keyword id="KW-0413">Isomerase</keyword>
<keyword id="KW-0697">Rotamase</keyword>
<reference key="1">
    <citation type="journal article" date="2004" name="Nat. Biotechnol.">
        <title>The genome sequence of the extreme thermophile Thermus thermophilus.</title>
        <authorList>
            <person name="Henne A."/>
            <person name="Brueggemann H."/>
            <person name="Raasch C."/>
            <person name="Wiezer A."/>
            <person name="Hartsch T."/>
            <person name="Liesegang H."/>
            <person name="Johann A."/>
            <person name="Lienard T."/>
            <person name="Gohl O."/>
            <person name="Martinez-Arias R."/>
            <person name="Jacobi C."/>
            <person name="Starkuviene V."/>
            <person name="Schlenczeck S."/>
            <person name="Dencker S."/>
            <person name="Huber R."/>
            <person name="Klenk H.-P."/>
            <person name="Kramer W."/>
            <person name="Merkl R."/>
            <person name="Gottschalk G."/>
            <person name="Fritz H.-J."/>
        </authorList>
    </citation>
    <scope>NUCLEOTIDE SEQUENCE [LARGE SCALE GENOMIC DNA]</scope>
    <source>
        <strain>ATCC BAA-163 / DSM 7039 / HB27</strain>
    </source>
</reference>
<evidence type="ECO:0000255" key="1">
    <source>
        <dbReference type="HAMAP-Rule" id="MF_00303"/>
    </source>
</evidence>
<accession>Q72L16</accession>
<gene>
    <name evidence="1" type="primary">tig</name>
    <name type="ordered locus">TT_C0249</name>
</gene>
<organism>
    <name type="scientific">Thermus thermophilus (strain ATCC BAA-163 / DSM 7039 / HB27)</name>
    <dbReference type="NCBI Taxonomy" id="262724"/>
    <lineage>
        <taxon>Bacteria</taxon>
        <taxon>Thermotogati</taxon>
        <taxon>Deinococcota</taxon>
        <taxon>Deinococci</taxon>
        <taxon>Thermales</taxon>
        <taxon>Thermaceae</taxon>
        <taxon>Thermus</taxon>
    </lineage>
</organism>
<feature type="chain" id="PRO_0000256637" description="Trigger factor">
    <location>
        <begin position="1"/>
        <end position="404"/>
    </location>
</feature>
<feature type="domain" description="PPIase FKBP-type" evidence="1">
    <location>
        <begin position="160"/>
        <end position="225"/>
    </location>
</feature>
<name>TIG_THET2</name>
<comment type="function">
    <text evidence="1">Involved in protein export. Acts as a chaperone by maintaining the newly synthesized protein in an open conformation. Functions as a peptidyl-prolyl cis-trans isomerase.</text>
</comment>
<comment type="catalytic activity">
    <reaction evidence="1">
        <text>[protein]-peptidylproline (omega=180) = [protein]-peptidylproline (omega=0)</text>
        <dbReference type="Rhea" id="RHEA:16237"/>
        <dbReference type="Rhea" id="RHEA-COMP:10747"/>
        <dbReference type="Rhea" id="RHEA-COMP:10748"/>
        <dbReference type="ChEBI" id="CHEBI:83833"/>
        <dbReference type="ChEBI" id="CHEBI:83834"/>
        <dbReference type="EC" id="5.2.1.8"/>
    </reaction>
</comment>
<comment type="subcellular location">
    <subcellularLocation>
        <location>Cytoplasm</location>
    </subcellularLocation>
    <text evidence="1">About half TF is bound to the ribosome near the polypeptide exit tunnel while the other half is free in the cytoplasm.</text>
</comment>
<comment type="domain">
    <text evidence="1">Consists of 3 domains; the N-terminus binds the ribosome, the middle domain has PPIase activity, while the C-terminus has intrinsic chaperone activity on its own.</text>
</comment>
<comment type="similarity">
    <text evidence="1">Belongs to the FKBP-type PPIase family. Tig subfamily.</text>
</comment>
<protein>
    <recommendedName>
        <fullName evidence="1">Trigger factor</fullName>
        <shortName evidence="1">TF</shortName>
        <ecNumber evidence="1">5.2.1.8</ecNumber>
    </recommendedName>
    <alternativeName>
        <fullName evidence="1">PPIase</fullName>
    </alternativeName>
</protein>
<dbReference type="EC" id="5.2.1.8" evidence="1"/>
<dbReference type="EMBL" id="AE017221">
    <property type="protein sequence ID" value="AAS80597.1"/>
    <property type="molecule type" value="Genomic_DNA"/>
</dbReference>
<dbReference type="RefSeq" id="WP_011172700.1">
    <property type="nucleotide sequence ID" value="NC_005835.1"/>
</dbReference>
<dbReference type="SMR" id="Q72L16"/>
<dbReference type="KEGG" id="tth:TT_C0249"/>
<dbReference type="eggNOG" id="COG0544">
    <property type="taxonomic scope" value="Bacteria"/>
</dbReference>
<dbReference type="HOGENOM" id="CLU_033058_3_1_0"/>
<dbReference type="OrthoDB" id="9767721at2"/>
<dbReference type="Proteomes" id="UP000000592">
    <property type="component" value="Chromosome"/>
</dbReference>
<dbReference type="GO" id="GO:0005737">
    <property type="term" value="C:cytoplasm"/>
    <property type="evidence" value="ECO:0007669"/>
    <property type="project" value="UniProtKB-SubCell"/>
</dbReference>
<dbReference type="GO" id="GO:0003755">
    <property type="term" value="F:peptidyl-prolyl cis-trans isomerase activity"/>
    <property type="evidence" value="ECO:0007669"/>
    <property type="project" value="UniProtKB-UniRule"/>
</dbReference>
<dbReference type="GO" id="GO:0044183">
    <property type="term" value="F:protein folding chaperone"/>
    <property type="evidence" value="ECO:0007669"/>
    <property type="project" value="TreeGrafter"/>
</dbReference>
<dbReference type="GO" id="GO:0043022">
    <property type="term" value="F:ribosome binding"/>
    <property type="evidence" value="ECO:0007669"/>
    <property type="project" value="TreeGrafter"/>
</dbReference>
<dbReference type="GO" id="GO:0051083">
    <property type="term" value="P:'de novo' cotranslational protein folding"/>
    <property type="evidence" value="ECO:0007669"/>
    <property type="project" value="TreeGrafter"/>
</dbReference>
<dbReference type="GO" id="GO:0051301">
    <property type="term" value="P:cell division"/>
    <property type="evidence" value="ECO:0007669"/>
    <property type="project" value="UniProtKB-KW"/>
</dbReference>
<dbReference type="GO" id="GO:0061077">
    <property type="term" value="P:chaperone-mediated protein folding"/>
    <property type="evidence" value="ECO:0007669"/>
    <property type="project" value="TreeGrafter"/>
</dbReference>
<dbReference type="GO" id="GO:0015031">
    <property type="term" value="P:protein transport"/>
    <property type="evidence" value="ECO:0007669"/>
    <property type="project" value="UniProtKB-UniRule"/>
</dbReference>
<dbReference type="GO" id="GO:0043335">
    <property type="term" value="P:protein unfolding"/>
    <property type="evidence" value="ECO:0007669"/>
    <property type="project" value="TreeGrafter"/>
</dbReference>
<dbReference type="Gene3D" id="3.10.50.40">
    <property type="match status" value="1"/>
</dbReference>
<dbReference type="Gene3D" id="3.30.70.1050">
    <property type="entry name" value="Trigger factor ribosome-binding domain"/>
    <property type="match status" value="1"/>
</dbReference>
<dbReference type="Gene3D" id="1.10.3120.10">
    <property type="entry name" value="Trigger factor, C-terminal domain"/>
    <property type="match status" value="1"/>
</dbReference>
<dbReference type="HAMAP" id="MF_00303">
    <property type="entry name" value="Trigger_factor_Tig"/>
    <property type="match status" value="1"/>
</dbReference>
<dbReference type="InterPro" id="IPR046357">
    <property type="entry name" value="PPIase_dom_sf"/>
</dbReference>
<dbReference type="InterPro" id="IPR005215">
    <property type="entry name" value="Trig_fac"/>
</dbReference>
<dbReference type="InterPro" id="IPR008880">
    <property type="entry name" value="Trigger_fac_C"/>
</dbReference>
<dbReference type="InterPro" id="IPR037041">
    <property type="entry name" value="Trigger_fac_C_sf"/>
</dbReference>
<dbReference type="InterPro" id="IPR008881">
    <property type="entry name" value="Trigger_fac_ribosome-bd_bac"/>
</dbReference>
<dbReference type="InterPro" id="IPR036611">
    <property type="entry name" value="Trigger_fac_ribosome-bd_sf"/>
</dbReference>
<dbReference type="InterPro" id="IPR027304">
    <property type="entry name" value="Trigger_fact/SurA_dom_sf"/>
</dbReference>
<dbReference type="NCBIfam" id="TIGR00115">
    <property type="entry name" value="tig"/>
    <property type="match status" value="1"/>
</dbReference>
<dbReference type="PANTHER" id="PTHR30560">
    <property type="entry name" value="TRIGGER FACTOR CHAPERONE AND PEPTIDYL-PROLYL CIS/TRANS ISOMERASE"/>
    <property type="match status" value="1"/>
</dbReference>
<dbReference type="PANTHER" id="PTHR30560:SF3">
    <property type="entry name" value="TRIGGER FACTOR-LIKE PROTEIN TIG, CHLOROPLASTIC"/>
    <property type="match status" value="1"/>
</dbReference>
<dbReference type="Pfam" id="PF05698">
    <property type="entry name" value="Trigger_C"/>
    <property type="match status" value="1"/>
</dbReference>
<dbReference type="Pfam" id="PF05697">
    <property type="entry name" value="Trigger_N"/>
    <property type="match status" value="1"/>
</dbReference>
<dbReference type="PIRSF" id="PIRSF003095">
    <property type="entry name" value="Trigger_factor"/>
    <property type="match status" value="1"/>
</dbReference>
<dbReference type="SUPFAM" id="SSF54534">
    <property type="entry name" value="FKBP-like"/>
    <property type="match status" value="1"/>
</dbReference>
<dbReference type="SUPFAM" id="SSF109998">
    <property type="entry name" value="Triger factor/SurA peptide-binding domain-like"/>
    <property type="match status" value="1"/>
</dbReference>
<dbReference type="SUPFAM" id="SSF102735">
    <property type="entry name" value="Trigger factor ribosome-binding domain"/>
    <property type="match status" value="1"/>
</dbReference>